<gene>
    <name type="primary">MYL9</name>
    <name type="synonym">MYRL2</name>
</gene>
<proteinExistence type="evidence at transcript level"/>
<accession>Q5E9E2</accession>
<sequence length="172" mass="19865">MSSKRAKTKTTKKRPQRATSNVFAMFDQSQIQEFKEAFNMIDQNRDGFIDKEDLHDMLASLGKNPTDEYLDAMMNEAPGPINFTMFLTMFGEKLNGTDPEDVIRNAFACFDEEATGTIQEDYLRELLTTMGDRFTDEEVDELYREAPIDKKGNFNYIEFTRILKHGAKDKDD</sequence>
<feature type="initiator methionine" description="Removed" evidence="4">
    <location>
        <position position="1"/>
    </location>
</feature>
<feature type="chain" id="PRO_0000247600" description="Myosin regulatory light polypeptide 9">
    <location>
        <begin position="2"/>
        <end position="172"/>
    </location>
</feature>
<feature type="domain" description="EF-hand 1" evidence="6">
    <location>
        <begin position="29"/>
        <end position="64"/>
    </location>
</feature>
<feature type="domain" description="EF-hand 2" evidence="6">
    <location>
        <begin position="98"/>
        <end position="133"/>
    </location>
</feature>
<feature type="domain" description="EF-hand 3" evidence="6">
    <location>
        <begin position="134"/>
        <end position="169"/>
    </location>
</feature>
<feature type="region of interest" description="Disordered" evidence="7">
    <location>
        <begin position="1"/>
        <end position="20"/>
    </location>
</feature>
<feature type="compositionally biased region" description="Basic residues" evidence="7">
    <location>
        <begin position="1"/>
        <end position="16"/>
    </location>
</feature>
<feature type="binding site" evidence="6">
    <location>
        <position position="42"/>
    </location>
    <ligand>
        <name>Ca(2+)</name>
        <dbReference type="ChEBI" id="CHEBI:29108"/>
    </ligand>
</feature>
<feature type="binding site" evidence="6">
    <location>
        <position position="44"/>
    </location>
    <ligand>
        <name>Ca(2+)</name>
        <dbReference type="ChEBI" id="CHEBI:29108"/>
    </ligand>
</feature>
<feature type="binding site" evidence="6">
    <location>
        <position position="46"/>
    </location>
    <ligand>
        <name>Ca(2+)</name>
        <dbReference type="ChEBI" id="CHEBI:29108"/>
    </ligand>
</feature>
<feature type="binding site" evidence="6">
    <location>
        <position position="53"/>
    </location>
    <ligand>
        <name>Ca(2+)</name>
        <dbReference type="ChEBI" id="CHEBI:29108"/>
    </ligand>
</feature>
<feature type="modified residue" description="N-acetylserine" evidence="4">
    <location>
        <position position="2"/>
    </location>
</feature>
<feature type="modified residue" description="Phosphothreonine; by MLCK, CIT and ROCK2" evidence="3">
    <location>
        <position position="19"/>
    </location>
</feature>
<feature type="modified residue" description="Phosphoserine; by CDC42BP, CIT, MLCK, PAK1, ROCK1, ROCK2, DAPK1, DAPK2 and ZIPK/DAPK3" evidence="3">
    <location>
        <position position="20"/>
    </location>
</feature>
<organism>
    <name type="scientific">Bos taurus</name>
    <name type="common">Bovine</name>
    <dbReference type="NCBI Taxonomy" id="9913"/>
    <lineage>
        <taxon>Eukaryota</taxon>
        <taxon>Metazoa</taxon>
        <taxon>Chordata</taxon>
        <taxon>Craniata</taxon>
        <taxon>Vertebrata</taxon>
        <taxon>Euteleostomi</taxon>
        <taxon>Mammalia</taxon>
        <taxon>Eutheria</taxon>
        <taxon>Laurasiatheria</taxon>
        <taxon>Artiodactyla</taxon>
        <taxon>Ruminantia</taxon>
        <taxon>Pecora</taxon>
        <taxon>Bovidae</taxon>
        <taxon>Bovinae</taxon>
        <taxon>Bos</taxon>
    </lineage>
</organism>
<protein>
    <recommendedName>
        <fullName>Myosin regulatory light polypeptide 9</fullName>
    </recommendedName>
    <alternativeName>
        <fullName>Myosin regulatory light chain 2, smooth muscle isoform</fullName>
    </alternativeName>
    <alternativeName>
        <fullName>Myosin regulatory light chain 9</fullName>
    </alternativeName>
</protein>
<name>MYL9_BOVIN</name>
<dbReference type="EMBL" id="BT020978">
    <property type="protein sequence ID" value="AAX08995.1"/>
    <property type="molecule type" value="mRNA"/>
</dbReference>
<dbReference type="EMBL" id="BC118244">
    <property type="protein sequence ID" value="AAI18245.1"/>
    <property type="molecule type" value="mRNA"/>
</dbReference>
<dbReference type="RefSeq" id="NP_001015640.1">
    <property type="nucleotide sequence ID" value="NM_001015640.2"/>
</dbReference>
<dbReference type="RefSeq" id="XP_005224259.1">
    <property type="nucleotide sequence ID" value="XM_005224202.3"/>
</dbReference>
<dbReference type="SMR" id="Q5E9E2"/>
<dbReference type="FunCoup" id="Q5E9E2">
    <property type="interactions" value="2133"/>
</dbReference>
<dbReference type="STRING" id="9913.ENSBTAP00000021328"/>
<dbReference type="iPTMnet" id="Q5E9E2"/>
<dbReference type="PaxDb" id="9913-ENSBTAP00000021328"/>
<dbReference type="Ensembl" id="ENSBTAT00000021328.6">
    <property type="protein sequence ID" value="ENSBTAP00000021328.4"/>
    <property type="gene ID" value="ENSBTAG00000016024.7"/>
</dbReference>
<dbReference type="GeneID" id="531505"/>
<dbReference type="KEGG" id="bta:531505"/>
<dbReference type="CTD" id="10627"/>
<dbReference type="VEuPathDB" id="HostDB:ENSBTAG00000016024"/>
<dbReference type="eggNOG" id="KOG0031">
    <property type="taxonomic scope" value="Eukaryota"/>
</dbReference>
<dbReference type="GeneTree" id="ENSGT00940000153607"/>
<dbReference type="HOGENOM" id="CLU_061288_9_3_1"/>
<dbReference type="InParanoid" id="Q5E9E2"/>
<dbReference type="OMA" id="WIPEDYL"/>
<dbReference type="OrthoDB" id="429467at2759"/>
<dbReference type="TreeFam" id="TF314218"/>
<dbReference type="Reactome" id="R-BTA-3928664">
    <property type="pathway name" value="Ephrin signaling"/>
</dbReference>
<dbReference type="Reactome" id="R-BTA-445355">
    <property type="pathway name" value="Smooth Muscle Contraction"/>
</dbReference>
<dbReference type="Proteomes" id="UP000009136">
    <property type="component" value="Chromosome 24"/>
</dbReference>
<dbReference type="Bgee" id="ENSBTAG00000016024">
    <property type="expression patterns" value="Expressed in gluteus medius and 104 other cell types or tissues"/>
</dbReference>
<dbReference type="GO" id="GO:0042641">
    <property type="term" value="C:actomyosin"/>
    <property type="evidence" value="ECO:0000314"/>
    <property type="project" value="UniProtKB"/>
</dbReference>
<dbReference type="GO" id="GO:0005938">
    <property type="term" value="C:cell cortex"/>
    <property type="evidence" value="ECO:0007669"/>
    <property type="project" value="UniProtKB-SubCell"/>
</dbReference>
<dbReference type="GO" id="GO:0005737">
    <property type="term" value="C:cytoplasm"/>
    <property type="evidence" value="ECO:0000318"/>
    <property type="project" value="GO_Central"/>
</dbReference>
<dbReference type="GO" id="GO:0016460">
    <property type="term" value="C:myosin II complex"/>
    <property type="evidence" value="ECO:0000314"/>
    <property type="project" value="UniProtKB"/>
</dbReference>
<dbReference type="GO" id="GO:0097513">
    <property type="term" value="C:myosin II filament"/>
    <property type="evidence" value="ECO:0000314"/>
    <property type="project" value="UniProtKB"/>
</dbReference>
<dbReference type="GO" id="GO:0005509">
    <property type="term" value="F:calcium ion binding"/>
    <property type="evidence" value="ECO:0007669"/>
    <property type="project" value="InterPro"/>
</dbReference>
<dbReference type="GO" id="GO:0032036">
    <property type="term" value="F:myosin heavy chain binding"/>
    <property type="evidence" value="ECO:0000318"/>
    <property type="project" value="GO_Central"/>
</dbReference>
<dbReference type="GO" id="GO:0031032">
    <property type="term" value="P:actomyosin structure organization"/>
    <property type="evidence" value="ECO:0000314"/>
    <property type="project" value="UniProtKB"/>
</dbReference>
<dbReference type="CDD" id="cd00051">
    <property type="entry name" value="EFh"/>
    <property type="match status" value="1"/>
</dbReference>
<dbReference type="FunFam" id="1.10.238.10:FF:000010">
    <property type="entry name" value="Myosin regulatory light chain 2, atrial isoform"/>
    <property type="match status" value="1"/>
</dbReference>
<dbReference type="FunFam" id="1.10.238.10:FF:000007">
    <property type="entry name" value="Putative myosin regulatory light chain sqh"/>
    <property type="match status" value="1"/>
</dbReference>
<dbReference type="Gene3D" id="1.10.238.10">
    <property type="entry name" value="EF-hand"/>
    <property type="match status" value="2"/>
</dbReference>
<dbReference type="InterPro" id="IPR011992">
    <property type="entry name" value="EF-hand-dom_pair"/>
</dbReference>
<dbReference type="InterPro" id="IPR018247">
    <property type="entry name" value="EF_Hand_1_Ca_BS"/>
</dbReference>
<dbReference type="InterPro" id="IPR015070">
    <property type="entry name" value="EF_hand_DJBP"/>
</dbReference>
<dbReference type="InterPro" id="IPR002048">
    <property type="entry name" value="EF_hand_dom"/>
</dbReference>
<dbReference type="InterPro" id="IPR050403">
    <property type="entry name" value="Myosin_RLC"/>
</dbReference>
<dbReference type="PANTHER" id="PTHR23049">
    <property type="entry name" value="MYOSIN REGULATORY LIGHT CHAIN 2"/>
    <property type="match status" value="1"/>
</dbReference>
<dbReference type="Pfam" id="PF08976">
    <property type="entry name" value="EF-hand_11"/>
    <property type="match status" value="1"/>
</dbReference>
<dbReference type="Pfam" id="PF13499">
    <property type="entry name" value="EF-hand_7"/>
    <property type="match status" value="1"/>
</dbReference>
<dbReference type="SMART" id="SM00054">
    <property type="entry name" value="EFh"/>
    <property type="match status" value="2"/>
</dbReference>
<dbReference type="SUPFAM" id="SSF47473">
    <property type="entry name" value="EF-hand"/>
    <property type="match status" value="1"/>
</dbReference>
<dbReference type="PROSITE" id="PS00018">
    <property type="entry name" value="EF_HAND_1"/>
    <property type="match status" value="1"/>
</dbReference>
<dbReference type="PROSITE" id="PS50222">
    <property type="entry name" value="EF_HAND_2"/>
    <property type="match status" value="3"/>
</dbReference>
<evidence type="ECO:0000250" key="1"/>
<evidence type="ECO:0000250" key="2">
    <source>
        <dbReference type="UniProtKB" id="P02612"/>
    </source>
</evidence>
<evidence type="ECO:0000250" key="3">
    <source>
        <dbReference type="UniProtKB" id="P24844"/>
    </source>
</evidence>
<evidence type="ECO:0000250" key="4">
    <source>
        <dbReference type="UniProtKB" id="P29269"/>
    </source>
</evidence>
<evidence type="ECO:0000250" key="5">
    <source>
        <dbReference type="UniProtKB" id="Q9CQ19"/>
    </source>
</evidence>
<evidence type="ECO:0000255" key="6">
    <source>
        <dbReference type="PROSITE-ProRule" id="PRU00448"/>
    </source>
</evidence>
<evidence type="ECO:0000256" key="7">
    <source>
        <dbReference type="SAM" id="MobiDB-lite"/>
    </source>
</evidence>
<reference key="1">
    <citation type="journal article" date="2005" name="BMC Genomics">
        <title>Characterization of 954 bovine full-CDS cDNA sequences.</title>
        <authorList>
            <person name="Harhay G.P."/>
            <person name="Sonstegard T.S."/>
            <person name="Keele J.W."/>
            <person name="Heaton M.P."/>
            <person name="Clawson M.L."/>
            <person name="Snelling W.M."/>
            <person name="Wiedmann R.T."/>
            <person name="Van Tassell C.P."/>
            <person name="Smith T.P.L."/>
        </authorList>
    </citation>
    <scope>NUCLEOTIDE SEQUENCE [LARGE SCALE MRNA]</scope>
</reference>
<reference key="2">
    <citation type="submission" date="2006-06" db="EMBL/GenBank/DDBJ databases">
        <authorList>
            <consortium name="NIH - Mammalian Gene Collection (MGC) project"/>
        </authorList>
    </citation>
    <scope>NUCLEOTIDE SEQUENCE [LARGE SCALE MRNA]</scope>
    <source>
        <strain>Hereford</strain>
        <tissue>Fetal skin</tissue>
    </source>
</reference>
<keyword id="KW-0007">Acetylation</keyword>
<keyword id="KW-0106">Calcium</keyword>
<keyword id="KW-0963">Cytoplasm</keyword>
<keyword id="KW-0206">Cytoskeleton</keyword>
<keyword id="KW-0479">Metal-binding</keyword>
<keyword id="KW-0505">Motor protein</keyword>
<keyword id="KW-0514">Muscle protein</keyword>
<keyword id="KW-0518">Myosin</keyword>
<keyword id="KW-0597">Phosphoprotein</keyword>
<keyword id="KW-1185">Reference proteome</keyword>
<keyword id="KW-0677">Repeat</keyword>
<comment type="function">
    <text evidence="3 5">Myosin regulatory subunit that plays an important role in regulation of both smooth muscle and nonmuscle cell contractile activity via its phosphorylation. Implicated in cytokinesis, receptor capping, and cell locomotion (By similarity). In myoblasts, may regulate PIEZO1-dependent cortical actomyosin assembly involved in myotube formation (By similarity).</text>
</comment>
<comment type="subunit">
    <text evidence="3 5">Myosin is a hexamer of 2 heavy chains and 4 light chains: interacts with myosin heavy chain MYO19 (By similarity). Interacts with LUZP1; the interaction results in inhibition of phosphorylation of MYL9 by DAPK3 (By similarity).</text>
</comment>
<comment type="subcellular location">
    <subcellularLocation>
        <location evidence="5">Cytoplasm</location>
        <location evidence="5">Cytoskeleton</location>
    </subcellularLocation>
    <subcellularLocation>
        <location evidence="5">Cytoplasm</location>
        <location evidence="5">Cell cortex</location>
    </subcellularLocation>
    <text evidence="5">Colocalizes with F-actin, MYH9 and PIEZO1 at the actomyosin cortex in myoblasts.</text>
</comment>
<comment type="PTM">
    <text evidence="2 3">Phosphorylation increases the actin-activated myosin ATPase activity and thereby regulates the contractile activity. It is required to generate the driving force in the migration of the cells but not necessary for localization of myosin-2 at the leading edge. Phosphorylation is required for myotube formation. Phosphorylated by DAPK3; DAPK3-mediated phosphorylation is inhibited by LUZP1.</text>
</comment>
<comment type="miscellaneous">
    <text evidence="1">This chain binds calcium.</text>
</comment>